<gene>
    <name evidence="1" type="primary">rpmD</name>
    <name type="ordered locus">TPASS_0206.2</name>
    <name type="ORF">TPASS_0206b</name>
</gene>
<sequence>MTKRVRITLVRSTIGQREPVRRTVRSLGLRKLHSMVEKDGSPAVLGMVRAVSHLVRVEELG</sequence>
<comment type="subunit">
    <text evidence="1">Part of the 50S ribosomal subunit.</text>
</comment>
<comment type="similarity">
    <text evidence="1">Belongs to the universal ribosomal protein uL30 family.</text>
</comment>
<dbReference type="EMBL" id="CP000805">
    <property type="protein sequence ID" value="ACD70633.1"/>
    <property type="molecule type" value="Genomic_DNA"/>
</dbReference>
<dbReference type="RefSeq" id="WP_010881654.1">
    <property type="nucleotide sequence ID" value="NC_021508.1"/>
</dbReference>
<dbReference type="SMR" id="B2S2F4"/>
<dbReference type="GeneID" id="93875994"/>
<dbReference type="KEGG" id="tpp:TPASS_0206b"/>
<dbReference type="PATRIC" id="fig|455434.6.peg.210"/>
<dbReference type="Proteomes" id="UP000001202">
    <property type="component" value="Chromosome"/>
</dbReference>
<dbReference type="GO" id="GO:0022625">
    <property type="term" value="C:cytosolic large ribosomal subunit"/>
    <property type="evidence" value="ECO:0007669"/>
    <property type="project" value="TreeGrafter"/>
</dbReference>
<dbReference type="GO" id="GO:0003735">
    <property type="term" value="F:structural constituent of ribosome"/>
    <property type="evidence" value="ECO:0007669"/>
    <property type="project" value="InterPro"/>
</dbReference>
<dbReference type="GO" id="GO:0006412">
    <property type="term" value="P:translation"/>
    <property type="evidence" value="ECO:0007669"/>
    <property type="project" value="UniProtKB-UniRule"/>
</dbReference>
<dbReference type="CDD" id="cd01658">
    <property type="entry name" value="Ribosomal_L30"/>
    <property type="match status" value="1"/>
</dbReference>
<dbReference type="Gene3D" id="3.30.1390.20">
    <property type="entry name" value="Ribosomal protein L30, ferredoxin-like fold domain"/>
    <property type="match status" value="1"/>
</dbReference>
<dbReference type="HAMAP" id="MF_01371_B">
    <property type="entry name" value="Ribosomal_uL30_B"/>
    <property type="match status" value="1"/>
</dbReference>
<dbReference type="InterPro" id="IPR036919">
    <property type="entry name" value="Ribo_uL30_ferredoxin-like_sf"/>
</dbReference>
<dbReference type="InterPro" id="IPR005996">
    <property type="entry name" value="Ribosomal_uL30_bac-type"/>
</dbReference>
<dbReference type="InterPro" id="IPR018038">
    <property type="entry name" value="Ribosomal_uL30_CS"/>
</dbReference>
<dbReference type="InterPro" id="IPR016082">
    <property type="entry name" value="Ribosomal_uL30_ferredoxin-like"/>
</dbReference>
<dbReference type="NCBIfam" id="TIGR01308">
    <property type="entry name" value="rpmD_bact"/>
    <property type="match status" value="1"/>
</dbReference>
<dbReference type="PANTHER" id="PTHR15892:SF2">
    <property type="entry name" value="LARGE RIBOSOMAL SUBUNIT PROTEIN UL30M"/>
    <property type="match status" value="1"/>
</dbReference>
<dbReference type="PANTHER" id="PTHR15892">
    <property type="entry name" value="MITOCHONDRIAL RIBOSOMAL PROTEIN L30"/>
    <property type="match status" value="1"/>
</dbReference>
<dbReference type="Pfam" id="PF00327">
    <property type="entry name" value="Ribosomal_L30"/>
    <property type="match status" value="1"/>
</dbReference>
<dbReference type="PIRSF" id="PIRSF002211">
    <property type="entry name" value="Ribosomal_L30_bac-type"/>
    <property type="match status" value="1"/>
</dbReference>
<dbReference type="SUPFAM" id="SSF55129">
    <property type="entry name" value="Ribosomal protein L30p/L7e"/>
    <property type="match status" value="1"/>
</dbReference>
<dbReference type="PROSITE" id="PS00634">
    <property type="entry name" value="RIBOSOMAL_L30"/>
    <property type="match status" value="1"/>
</dbReference>
<feature type="chain" id="PRO_1000144730" description="Large ribosomal subunit protein uL30">
    <location>
        <begin position="1"/>
        <end position="61"/>
    </location>
</feature>
<protein>
    <recommendedName>
        <fullName evidence="1">Large ribosomal subunit protein uL30</fullName>
    </recommendedName>
    <alternativeName>
        <fullName evidence="2">50S ribosomal protein L30</fullName>
    </alternativeName>
</protein>
<proteinExistence type="inferred from homology"/>
<evidence type="ECO:0000255" key="1">
    <source>
        <dbReference type="HAMAP-Rule" id="MF_01371"/>
    </source>
</evidence>
<evidence type="ECO:0000305" key="2"/>
<organism>
    <name type="scientific">Treponema pallidum subsp. pallidum (strain SS14)</name>
    <dbReference type="NCBI Taxonomy" id="455434"/>
    <lineage>
        <taxon>Bacteria</taxon>
        <taxon>Pseudomonadati</taxon>
        <taxon>Spirochaetota</taxon>
        <taxon>Spirochaetia</taxon>
        <taxon>Spirochaetales</taxon>
        <taxon>Treponemataceae</taxon>
        <taxon>Treponema</taxon>
    </lineage>
</organism>
<accession>B2S2F4</accession>
<name>RL30_TREPS</name>
<reference key="1">
    <citation type="journal article" date="2008" name="BMC Microbiol.">
        <title>Complete genome sequence of Treponema pallidum ssp. pallidum strain SS14 determined with oligonucleotide arrays.</title>
        <authorList>
            <person name="Matejkova P."/>
            <person name="Strouhal M."/>
            <person name="Smajs D."/>
            <person name="Norris S.J."/>
            <person name="Palzkill T."/>
            <person name="Petrosino J.F."/>
            <person name="Sodergren E."/>
            <person name="Norton J.E."/>
            <person name="Singh J."/>
            <person name="Richmond T.A."/>
            <person name="Molla M.N."/>
            <person name="Albert T.J."/>
            <person name="Weinstock G.M."/>
        </authorList>
    </citation>
    <scope>NUCLEOTIDE SEQUENCE [LARGE SCALE GENOMIC DNA]</scope>
    <source>
        <strain>SS14</strain>
    </source>
</reference>
<keyword id="KW-0687">Ribonucleoprotein</keyword>
<keyword id="KW-0689">Ribosomal protein</keyword>